<dbReference type="EMBL" id="CP000671">
    <property type="protein sequence ID" value="ABQ99021.1"/>
    <property type="molecule type" value="Genomic_DNA"/>
</dbReference>
<dbReference type="SMR" id="A5UE20"/>
<dbReference type="KEGG" id="hip:CGSHiEE_08610"/>
<dbReference type="HOGENOM" id="CLU_002472_4_0_6"/>
<dbReference type="GO" id="GO:0005829">
    <property type="term" value="C:cytosol"/>
    <property type="evidence" value="ECO:0007669"/>
    <property type="project" value="TreeGrafter"/>
</dbReference>
<dbReference type="GO" id="GO:0005524">
    <property type="term" value="F:ATP binding"/>
    <property type="evidence" value="ECO:0007669"/>
    <property type="project" value="UniProtKB-UniRule"/>
</dbReference>
<dbReference type="GO" id="GO:0140664">
    <property type="term" value="F:ATP-dependent DNA damage sensor activity"/>
    <property type="evidence" value="ECO:0007669"/>
    <property type="project" value="InterPro"/>
</dbReference>
<dbReference type="GO" id="GO:0003684">
    <property type="term" value="F:damaged DNA binding"/>
    <property type="evidence" value="ECO:0007669"/>
    <property type="project" value="UniProtKB-UniRule"/>
</dbReference>
<dbReference type="GO" id="GO:0030983">
    <property type="term" value="F:mismatched DNA binding"/>
    <property type="evidence" value="ECO:0007669"/>
    <property type="project" value="InterPro"/>
</dbReference>
<dbReference type="GO" id="GO:0006298">
    <property type="term" value="P:mismatch repair"/>
    <property type="evidence" value="ECO:0007669"/>
    <property type="project" value="UniProtKB-UniRule"/>
</dbReference>
<dbReference type="CDD" id="cd03284">
    <property type="entry name" value="ABC_MutS1"/>
    <property type="match status" value="1"/>
</dbReference>
<dbReference type="FunFam" id="1.10.1420.10:FF:000002">
    <property type="entry name" value="DNA mismatch repair protein MutS"/>
    <property type="match status" value="1"/>
</dbReference>
<dbReference type="FunFam" id="3.30.420.110:FF:000001">
    <property type="entry name" value="DNA mismatch repair protein MutS"/>
    <property type="match status" value="1"/>
</dbReference>
<dbReference type="FunFam" id="3.40.1170.10:FF:000001">
    <property type="entry name" value="DNA mismatch repair protein MutS"/>
    <property type="match status" value="1"/>
</dbReference>
<dbReference type="FunFam" id="3.40.50.300:FF:000283">
    <property type="entry name" value="DNA mismatch repair protein MutS"/>
    <property type="match status" value="1"/>
</dbReference>
<dbReference type="Gene3D" id="1.10.1420.10">
    <property type="match status" value="2"/>
</dbReference>
<dbReference type="Gene3D" id="6.10.140.430">
    <property type="match status" value="1"/>
</dbReference>
<dbReference type="Gene3D" id="3.40.1170.10">
    <property type="entry name" value="DNA repair protein MutS, domain I"/>
    <property type="match status" value="1"/>
</dbReference>
<dbReference type="Gene3D" id="3.30.420.110">
    <property type="entry name" value="MutS, connector domain"/>
    <property type="match status" value="1"/>
</dbReference>
<dbReference type="Gene3D" id="3.40.50.300">
    <property type="entry name" value="P-loop containing nucleotide triphosphate hydrolases"/>
    <property type="match status" value="1"/>
</dbReference>
<dbReference type="HAMAP" id="MF_00096">
    <property type="entry name" value="MutS"/>
    <property type="match status" value="1"/>
</dbReference>
<dbReference type="InterPro" id="IPR005748">
    <property type="entry name" value="DNA_mismatch_repair_MutS"/>
</dbReference>
<dbReference type="InterPro" id="IPR007695">
    <property type="entry name" value="DNA_mismatch_repair_MutS-lik_N"/>
</dbReference>
<dbReference type="InterPro" id="IPR017261">
    <property type="entry name" value="DNA_mismatch_repair_MutS/MSH"/>
</dbReference>
<dbReference type="InterPro" id="IPR000432">
    <property type="entry name" value="DNA_mismatch_repair_MutS_C"/>
</dbReference>
<dbReference type="InterPro" id="IPR007861">
    <property type="entry name" value="DNA_mismatch_repair_MutS_clamp"/>
</dbReference>
<dbReference type="InterPro" id="IPR007696">
    <property type="entry name" value="DNA_mismatch_repair_MutS_core"/>
</dbReference>
<dbReference type="InterPro" id="IPR016151">
    <property type="entry name" value="DNA_mismatch_repair_MutS_N"/>
</dbReference>
<dbReference type="InterPro" id="IPR036187">
    <property type="entry name" value="DNA_mismatch_repair_MutS_sf"/>
</dbReference>
<dbReference type="InterPro" id="IPR007860">
    <property type="entry name" value="DNA_mmatch_repair_MutS_con_dom"/>
</dbReference>
<dbReference type="InterPro" id="IPR045076">
    <property type="entry name" value="MutS"/>
</dbReference>
<dbReference type="InterPro" id="IPR036678">
    <property type="entry name" value="MutS_con_dom_sf"/>
</dbReference>
<dbReference type="InterPro" id="IPR027417">
    <property type="entry name" value="P-loop_NTPase"/>
</dbReference>
<dbReference type="NCBIfam" id="TIGR01070">
    <property type="entry name" value="mutS1"/>
    <property type="match status" value="1"/>
</dbReference>
<dbReference type="NCBIfam" id="NF003810">
    <property type="entry name" value="PRK05399.1"/>
    <property type="match status" value="1"/>
</dbReference>
<dbReference type="PANTHER" id="PTHR11361:SF34">
    <property type="entry name" value="DNA MISMATCH REPAIR PROTEIN MSH1, MITOCHONDRIAL"/>
    <property type="match status" value="1"/>
</dbReference>
<dbReference type="PANTHER" id="PTHR11361">
    <property type="entry name" value="DNA MISMATCH REPAIR PROTEIN MUTS FAMILY MEMBER"/>
    <property type="match status" value="1"/>
</dbReference>
<dbReference type="Pfam" id="PF01624">
    <property type="entry name" value="MutS_I"/>
    <property type="match status" value="1"/>
</dbReference>
<dbReference type="Pfam" id="PF05188">
    <property type="entry name" value="MutS_II"/>
    <property type="match status" value="1"/>
</dbReference>
<dbReference type="Pfam" id="PF05192">
    <property type="entry name" value="MutS_III"/>
    <property type="match status" value="1"/>
</dbReference>
<dbReference type="Pfam" id="PF05190">
    <property type="entry name" value="MutS_IV"/>
    <property type="match status" value="1"/>
</dbReference>
<dbReference type="Pfam" id="PF00488">
    <property type="entry name" value="MutS_V"/>
    <property type="match status" value="1"/>
</dbReference>
<dbReference type="PIRSF" id="PIRSF037677">
    <property type="entry name" value="DNA_mis_repair_Msh6"/>
    <property type="match status" value="1"/>
</dbReference>
<dbReference type="SMART" id="SM00534">
    <property type="entry name" value="MUTSac"/>
    <property type="match status" value="1"/>
</dbReference>
<dbReference type="SMART" id="SM00533">
    <property type="entry name" value="MUTSd"/>
    <property type="match status" value="1"/>
</dbReference>
<dbReference type="SUPFAM" id="SSF55271">
    <property type="entry name" value="DNA repair protein MutS, domain I"/>
    <property type="match status" value="1"/>
</dbReference>
<dbReference type="SUPFAM" id="SSF53150">
    <property type="entry name" value="DNA repair protein MutS, domain II"/>
    <property type="match status" value="1"/>
</dbReference>
<dbReference type="SUPFAM" id="SSF48334">
    <property type="entry name" value="DNA repair protein MutS, domain III"/>
    <property type="match status" value="1"/>
</dbReference>
<dbReference type="SUPFAM" id="SSF52540">
    <property type="entry name" value="P-loop containing nucleoside triphosphate hydrolases"/>
    <property type="match status" value="1"/>
</dbReference>
<dbReference type="PROSITE" id="PS00486">
    <property type="entry name" value="DNA_MISMATCH_REPAIR_2"/>
    <property type="match status" value="1"/>
</dbReference>
<proteinExistence type="inferred from homology"/>
<reference key="1">
    <citation type="journal article" date="2007" name="Genome Biol.">
        <title>Characterization and modeling of the Haemophilus influenzae core and supragenomes based on the complete genomic sequences of Rd and 12 clinical nontypeable strains.</title>
        <authorList>
            <person name="Hogg J.S."/>
            <person name="Hu F.Z."/>
            <person name="Janto B."/>
            <person name="Boissy R."/>
            <person name="Hayes J."/>
            <person name="Keefe R."/>
            <person name="Post J.C."/>
            <person name="Ehrlich G.D."/>
        </authorList>
    </citation>
    <scope>NUCLEOTIDE SEQUENCE [LARGE SCALE GENOMIC DNA]</scope>
    <source>
        <strain>PittEE</strain>
    </source>
</reference>
<protein>
    <recommendedName>
        <fullName evidence="1">DNA mismatch repair protein MutS</fullName>
    </recommendedName>
</protein>
<evidence type="ECO:0000255" key="1">
    <source>
        <dbReference type="HAMAP-Rule" id="MF_00096"/>
    </source>
</evidence>
<comment type="function">
    <text evidence="1">This protein is involved in the repair of mismatches in DNA. It is possible that it carries out the mismatch recognition step. This protein has a weak ATPase activity.</text>
</comment>
<comment type="similarity">
    <text evidence="1">Belongs to the DNA mismatch repair MutS family.</text>
</comment>
<keyword id="KW-0067">ATP-binding</keyword>
<keyword id="KW-0227">DNA damage</keyword>
<keyword id="KW-0234">DNA repair</keyword>
<keyword id="KW-0238">DNA-binding</keyword>
<keyword id="KW-0547">Nucleotide-binding</keyword>
<name>MUTS_HAEIE</name>
<sequence>MISEENFQQHTPMMQQYLKLKAENPDTLLFYRMGDFYELFYDDAKKAAALLDISLTKRGQSAGQPIPMAGMPYHAVEGYLAKLVQLGESVAICEQIGDPATSKGPVERQIVRIVTPGTVSDEALLPERQDNLIAAVYQEKEKFGLATLDMTSGRFQLCEPADKETLRAELQRIVPVELLYCEEFNEMAAIEHCKGLRRRPIWEFELSTAITLLNRQFGTKDLRAFGVEKSPLGLSAAGCLLQYAKETQRTALPHIQSISLIQNQDCIQLDAATRRNLELTQNLSGGTENTLASVLDKCVTPMGSRLLKRWIHQPIRDVEKLKQRQQAIAEILNFDLVDELQPYLQLVGDMERILARVALRSARPRDLTRLRTALEQIPALRTIVQQKTPPFLTALFSQIADFSEQCDLLQRALIETPPLLIRDGGVIAEGYNTELDEWRMLSDGATQYLENLEKRERESTGIDTLKIGFNAVHGYYIQISQGQAHKAPIHYVRRQTLKNAERYIIPELKEYEDKVLKSKGAALALEKQLYDELFDLLLPHLGALQLASLALSELDVLVNLAERADTLNYVMPTFCDEVSVKIENGRHPVVEQVLKDPFIANPVELNHNRHLLIITGPNMGGKSTYMRQTALITLLAYIGSFVPADSARIGPIDRIFTRIGASDDLASGRSTFMVEMTEMANILHQATEQSLVLIDEIGRGTSTYDGLSLAWACAEWLAKKIRSLTLFATHYFELTALPEQLEGIVNIHLDALEHNNSIAFMHAVQDGAASKSYGLAVAALAGVPQSVIKLAKQKLTQLEKNSSHSADQQIQALREANHNQGELLFEQETDALREAIEKLDPDDLSPKQALAYLYQLKKMVG</sequence>
<organism>
    <name type="scientific">Haemophilus influenzae (strain PittEE)</name>
    <dbReference type="NCBI Taxonomy" id="374930"/>
    <lineage>
        <taxon>Bacteria</taxon>
        <taxon>Pseudomonadati</taxon>
        <taxon>Pseudomonadota</taxon>
        <taxon>Gammaproteobacteria</taxon>
        <taxon>Pasteurellales</taxon>
        <taxon>Pasteurellaceae</taxon>
        <taxon>Haemophilus</taxon>
    </lineage>
</organism>
<gene>
    <name evidence="1" type="primary">mutS</name>
    <name type="ordered locus">CGSHiEE_08610</name>
</gene>
<accession>A5UE20</accession>
<feature type="chain" id="PRO_1000008064" description="DNA mismatch repair protein MutS">
    <location>
        <begin position="1"/>
        <end position="861"/>
    </location>
</feature>
<feature type="binding site" evidence="1">
    <location>
        <begin position="616"/>
        <end position="623"/>
    </location>
    <ligand>
        <name>ATP</name>
        <dbReference type="ChEBI" id="CHEBI:30616"/>
    </ligand>
</feature>